<proteinExistence type="inferred from homology"/>
<reference key="1">
    <citation type="journal article" date="2009" name="Nat. Genet.">
        <title>Comparative genomic and phylogeographic analysis of Mycobacterium leprae.</title>
        <authorList>
            <person name="Monot M."/>
            <person name="Honore N."/>
            <person name="Garnier T."/>
            <person name="Zidane N."/>
            <person name="Sherafi D."/>
            <person name="Paniz-Mondolfi A."/>
            <person name="Matsuoka M."/>
            <person name="Taylor G.M."/>
            <person name="Donoghue H.D."/>
            <person name="Bouwman A."/>
            <person name="Mays S."/>
            <person name="Watson C."/>
            <person name="Lockwood D."/>
            <person name="Khamispour A."/>
            <person name="Dowlati Y."/>
            <person name="Jianping S."/>
            <person name="Rea T.H."/>
            <person name="Vera-Cabrera L."/>
            <person name="Stefani M.M."/>
            <person name="Banu S."/>
            <person name="Macdonald M."/>
            <person name="Sapkota B.R."/>
            <person name="Spencer J.S."/>
            <person name="Thomas J."/>
            <person name="Harshman K."/>
            <person name="Singh P."/>
            <person name="Busso P."/>
            <person name="Gattiker A."/>
            <person name="Rougemont J."/>
            <person name="Brennan P.J."/>
            <person name="Cole S.T."/>
        </authorList>
    </citation>
    <scope>NUCLEOTIDE SEQUENCE [LARGE SCALE GENOMIC DNA]</scope>
    <source>
        <strain>Br4923</strain>
    </source>
</reference>
<protein>
    <recommendedName>
        <fullName evidence="1">Ribosome maturation factor RimM</fullName>
    </recommendedName>
</protein>
<accession>B8ZRW7</accession>
<dbReference type="EMBL" id="FM211192">
    <property type="protein sequence ID" value="CAR71711.1"/>
    <property type="molecule type" value="Genomic_DNA"/>
</dbReference>
<dbReference type="SMR" id="B8ZRW7"/>
<dbReference type="KEGG" id="mlb:MLBr01616"/>
<dbReference type="HOGENOM" id="CLU_077636_0_0_11"/>
<dbReference type="Proteomes" id="UP000006900">
    <property type="component" value="Chromosome"/>
</dbReference>
<dbReference type="GO" id="GO:0005737">
    <property type="term" value="C:cytoplasm"/>
    <property type="evidence" value="ECO:0007669"/>
    <property type="project" value="UniProtKB-SubCell"/>
</dbReference>
<dbReference type="GO" id="GO:0005840">
    <property type="term" value="C:ribosome"/>
    <property type="evidence" value="ECO:0007669"/>
    <property type="project" value="InterPro"/>
</dbReference>
<dbReference type="GO" id="GO:0043022">
    <property type="term" value="F:ribosome binding"/>
    <property type="evidence" value="ECO:0007669"/>
    <property type="project" value="InterPro"/>
</dbReference>
<dbReference type="GO" id="GO:0042274">
    <property type="term" value="P:ribosomal small subunit biogenesis"/>
    <property type="evidence" value="ECO:0007669"/>
    <property type="project" value="UniProtKB-UniRule"/>
</dbReference>
<dbReference type="GO" id="GO:0006364">
    <property type="term" value="P:rRNA processing"/>
    <property type="evidence" value="ECO:0007669"/>
    <property type="project" value="UniProtKB-UniRule"/>
</dbReference>
<dbReference type="Gene3D" id="2.30.30.240">
    <property type="entry name" value="PRC-barrel domain"/>
    <property type="match status" value="1"/>
</dbReference>
<dbReference type="Gene3D" id="2.40.30.60">
    <property type="entry name" value="RimM"/>
    <property type="match status" value="1"/>
</dbReference>
<dbReference type="HAMAP" id="MF_00014">
    <property type="entry name" value="Ribosome_mat_RimM"/>
    <property type="match status" value="1"/>
</dbReference>
<dbReference type="InterPro" id="IPR027275">
    <property type="entry name" value="PRC-brl_dom"/>
</dbReference>
<dbReference type="InterPro" id="IPR011033">
    <property type="entry name" value="PRC_barrel-like_sf"/>
</dbReference>
<dbReference type="InterPro" id="IPR011961">
    <property type="entry name" value="RimM"/>
</dbReference>
<dbReference type="InterPro" id="IPR002676">
    <property type="entry name" value="RimM_N"/>
</dbReference>
<dbReference type="InterPro" id="IPR036976">
    <property type="entry name" value="RimM_N_sf"/>
</dbReference>
<dbReference type="InterPro" id="IPR009000">
    <property type="entry name" value="Transl_B-barrel_sf"/>
</dbReference>
<dbReference type="NCBIfam" id="TIGR02273">
    <property type="entry name" value="16S_RimM"/>
    <property type="match status" value="1"/>
</dbReference>
<dbReference type="PANTHER" id="PTHR33692">
    <property type="entry name" value="RIBOSOME MATURATION FACTOR RIMM"/>
    <property type="match status" value="1"/>
</dbReference>
<dbReference type="PANTHER" id="PTHR33692:SF1">
    <property type="entry name" value="RIBOSOME MATURATION FACTOR RIMM"/>
    <property type="match status" value="1"/>
</dbReference>
<dbReference type="Pfam" id="PF05239">
    <property type="entry name" value="PRC"/>
    <property type="match status" value="1"/>
</dbReference>
<dbReference type="Pfam" id="PF01782">
    <property type="entry name" value="RimM"/>
    <property type="match status" value="1"/>
</dbReference>
<dbReference type="SUPFAM" id="SSF50346">
    <property type="entry name" value="PRC-barrel domain"/>
    <property type="match status" value="1"/>
</dbReference>
<dbReference type="SUPFAM" id="SSF50447">
    <property type="entry name" value="Translation proteins"/>
    <property type="match status" value="1"/>
</dbReference>
<feature type="chain" id="PRO_1000196564" description="Ribosome maturation factor RimM">
    <location>
        <begin position="1"/>
        <end position="179"/>
    </location>
</feature>
<feature type="domain" description="PRC barrel" evidence="1">
    <location>
        <begin position="103"/>
        <end position="176"/>
    </location>
</feature>
<evidence type="ECO:0000255" key="1">
    <source>
        <dbReference type="HAMAP-Rule" id="MF_00014"/>
    </source>
</evidence>
<sequence length="179" mass="19295">MHAHGALLELTIGRVVKAHGIGGEVVVEIRTDDPASRFCPGNILRAKDFPRGGPERRYTVVYAREHGARLLVRLAGVSDRDAADALRGSLFVIDSLDLPPIDEPDTYYDHQLEGLQVRTMMGRDVGVVAEVLHTAAGELLAVRCDSGEVLVPFVGAIVKLVSLDDGIVEIDPPKGLLDL</sequence>
<gene>
    <name evidence="1" type="primary">rimM</name>
    <name type="ordered locus">MLBr01616</name>
</gene>
<comment type="function">
    <text evidence="1">An accessory protein needed during the final step in the assembly of 30S ribosomal subunit, possibly for assembly of the head region. Essential for efficient processing of 16S rRNA. May be needed both before and after RbfA during the maturation of 16S rRNA. It has affinity for free ribosomal 30S subunits but not for 70S ribosomes.</text>
</comment>
<comment type="subunit">
    <text evidence="1">Binds ribosomal protein uS19.</text>
</comment>
<comment type="subcellular location">
    <subcellularLocation>
        <location evidence="1">Cytoplasm</location>
    </subcellularLocation>
</comment>
<comment type="domain">
    <text evidence="1">The PRC barrel domain binds ribosomal protein uS19.</text>
</comment>
<comment type="similarity">
    <text evidence="1">Belongs to the RimM family.</text>
</comment>
<keyword id="KW-0143">Chaperone</keyword>
<keyword id="KW-0963">Cytoplasm</keyword>
<keyword id="KW-0690">Ribosome biogenesis</keyword>
<keyword id="KW-0698">rRNA processing</keyword>
<organism>
    <name type="scientific">Mycobacterium leprae (strain Br4923)</name>
    <dbReference type="NCBI Taxonomy" id="561304"/>
    <lineage>
        <taxon>Bacteria</taxon>
        <taxon>Bacillati</taxon>
        <taxon>Actinomycetota</taxon>
        <taxon>Actinomycetes</taxon>
        <taxon>Mycobacteriales</taxon>
        <taxon>Mycobacteriaceae</taxon>
        <taxon>Mycobacterium</taxon>
    </lineage>
</organism>
<name>RIMM_MYCLB</name>